<evidence type="ECO:0000255" key="1">
    <source>
        <dbReference type="HAMAP-Rule" id="MF_00180"/>
    </source>
</evidence>
<dbReference type="EC" id="4.1.99.12" evidence="1"/>
<dbReference type="EMBL" id="CP000886">
    <property type="protein sequence ID" value="ABX69318.1"/>
    <property type="molecule type" value="Genomic_DNA"/>
</dbReference>
<dbReference type="RefSeq" id="WP_001076978.1">
    <property type="nucleotide sequence ID" value="NC_010102.1"/>
</dbReference>
<dbReference type="SMR" id="A9N5X2"/>
<dbReference type="KEGG" id="spq:SPAB_03988"/>
<dbReference type="PATRIC" id="fig|1016998.12.peg.3760"/>
<dbReference type="HOGENOM" id="CLU_020273_3_0_6"/>
<dbReference type="BioCyc" id="SENT1016998:SPAB_RS16195-MONOMER"/>
<dbReference type="UniPathway" id="UPA00275">
    <property type="reaction ID" value="UER00399"/>
</dbReference>
<dbReference type="Proteomes" id="UP000008556">
    <property type="component" value="Chromosome"/>
</dbReference>
<dbReference type="GO" id="GO:0005829">
    <property type="term" value="C:cytosol"/>
    <property type="evidence" value="ECO:0007669"/>
    <property type="project" value="TreeGrafter"/>
</dbReference>
<dbReference type="GO" id="GO:0008686">
    <property type="term" value="F:3,4-dihydroxy-2-butanone-4-phosphate synthase activity"/>
    <property type="evidence" value="ECO:0007669"/>
    <property type="project" value="UniProtKB-UniRule"/>
</dbReference>
<dbReference type="GO" id="GO:0000287">
    <property type="term" value="F:magnesium ion binding"/>
    <property type="evidence" value="ECO:0007669"/>
    <property type="project" value="UniProtKB-UniRule"/>
</dbReference>
<dbReference type="GO" id="GO:0030145">
    <property type="term" value="F:manganese ion binding"/>
    <property type="evidence" value="ECO:0007669"/>
    <property type="project" value="UniProtKB-UniRule"/>
</dbReference>
<dbReference type="GO" id="GO:0009231">
    <property type="term" value="P:riboflavin biosynthetic process"/>
    <property type="evidence" value="ECO:0007669"/>
    <property type="project" value="UniProtKB-UniRule"/>
</dbReference>
<dbReference type="FunFam" id="3.90.870.10:FF:000002">
    <property type="entry name" value="3,4-dihydroxy-2-butanone 4-phosphate synthase"/>
    <property type="match status" value="1"/>
</dbReference>
<dbReference type="Gene3D" id="3.90.870.10">
    <property type="entry name" value="DHBP synthase"/>
    <property type="match status" value="1"/>
</dbReference>
<dbReference type="HAMAP" id="MF_00180">
    <property type="entry name" value="RibB"/>
    <property type="match status" value="1"/>
</dbReference>
<dbReference type="InterPro" id="IPR017945">
    <property type="entry name" value="DHBP_synth_RibB-like_a/b_dom"/>
</dbReference>
<dbReference type="InterPro" id="IPR000422">
    <property type="entry name" value="DHBP_synthase_RibB"/>
</dbReference>
<dbReference type="NCBIfam" id="TIGR00506">
    <property type="entry name" value="ribB"/>
    <property type="match status" value="1"/>
</dbReference>
<dbReference type="PANTHER" id="PTHR21327:SF38">
    <property type="entry name" value="3,4-DIHYDROXY-2-BUTANONE 4-PHOSPHATE SYNTHASE"/>
    <property type="match status" value="1"/>
</dbReference>
<dbReference type="PANTHER" id="PTHR21327">
    <property type="entry name" value="GTP CYCLOHYDROLASE II-RELATED"/>
    <property type="match status" value="1"/>
</dbReference>
<dbReference type="Pfam" id="PF00926">
    <property type="entry name" value="DHBP_synthase"/>
    <property type="match status" value="1"/>
</dbReference>
<dbReference type="SUPFAM" id="SSF55821">
    <property type="entry name" value="YrdC/RibB"/>
    <property type="match status" value="1"/>
</dbReference>
<comment type="function">
    <text evidence="1">Catalyzes the conversion of D-ribulose 5-phosphate to formate and 3,4-dihydroxy-2-butanone 4-phosphate.</text>
</comment>
<comment type="catalytic activity">
    <reaction evidence="1">
        <text>D-ribulose 5-phosphate = (2S)-2-hydroxy-3-oxobutyl phosphate + formate + H(+)</text>
        <dbReference type="Rhea" id="RHEA:18457"/>
        <dbReference type="ChEBI" id="CHEBI:15378"/>
        <dbReference type="ChEBI" id="CHEBI:15740"/>
        <dbReference type="ChEBI" id="CHEBI:58121"/>
        <dbReference type="ChEBI" id="CHEBI:58830"/>
        <dbReference type="EC" id="4.1.99.12"/>
    </reaction>
</comment>
<comment type="cofactor">
    <cofactor evidence="1">
        <name>Mg(2+)</name>
        <dbReference type="ChEBI" id="CHEBI:18420"/>
    </cofactor>
    <cofactor evidence="1">
        <name>Mn(2+)</name>
        <dbReference type="ChEBI" id="CHEBI:29035"/>
    </cofactor>
    <text evidence="1">Binds 2 divalent metal cations per subunit. Magnesium or manganese.</text>
</comment>
<comment type="pathway">
    <text evidence="1">Cofactor biosynthesis; riboflavin biosynthesis; 2-hydroxy-3-oxobutyl phosphate from D-ribulose 5-phosphate: step 1/1.</text>
</comment>
<comment type="subunit">
    <text evidence="1">Homodimer.</text>
</comment>
<comment type="similarity">
    <text evidence="1">Belongs to the DHBP synthase family.</text>
</comment>
<feature type="chain" id="PRO_1000077267" description="3,4-dihydroxy-2-butanone 4-phosphate synthase">
    <location>
        <begin position="1"/>
        <end position="217"/>
    </location>
</feature>
<feature type="binding site" evidence="1">
    <location>
        <begin position="37"/>
        <end position="38"/>
    </location>
    <ligand>
        <name>D-ribulose 5-phosphate</name>
        <dbReference type="ChEBI" id="CHEBI:58121"/>
    </ligand>
</feature>
<feature type="binding site" evidence="1">
    <location>
        <position position="38"/>
    </location>
    <ligand>
        <name>Mg(2+)</name>
        <dbReference type="ChEBI" id="CHEBI:18420"/>
        <label>1</label>
    </ligand>
</feature>
<feature type="binding site" evidence="1">
    <location>
        <position position="38"/>
    </location>
    <ligand>
        <name>Mg(2+)</name>
        <dbReference type="ChEBI" id="CHEBI:18420"/>
        <label>2</label>
    </ligand>
</feature>
<feature type="binding site" evidence="1">
    <location>
        <position position="42"/>
    </location>
    <ligand>
        <name>D-ribulose 5-phosphate</name>
        <dbReference type="ChEBI" id="CHEBI:58121"/>
    </ligand>
</feature>
<feature type="binding site" evidence="1">
    <location>
        <begin position="150"/>
        <end position="154"/>
    </location>
    <ligand>
        <name>D-ribulose 5-phosphate</name>
        <dbReference type="ChEBI" id="CHEBI:58121"/>
    </ligand>
</feature>
<feature type="binding site" evidence="1">
    <location>
        <position position="153"/>
    </location>
    <ligand>
        <name>Mg(2+)</name>
        <dbReference type="ChEBI" id="CHEBI:18420"/>
        <label>2</label>
    </ligand>
</feature>
<feature type="binding site" evidence="1">
    <location>
        <position position="174"/>
    </location>
    <ligand>
        <name>D-ribulose 5-phosphate</name>
        <dbReference type="ChEBI" id="CHEBI:58121"/>
    </ligand>
</feature>
<feature type="site" description="Essential for catalytic activity" evidence="1">
    <location>
        <position position="136"/>
    </location>
</feature>
<feature type="site" description="Essential for catalytic activity" evidence="1">
    <location>
        <position position="174"/>
    </location>
</feature>
<keyword id="KW-0456">Lyase</keyword>
<keyword id="KW-0460">Magnesium</keyword>
<keyword id="KW-0464">Manganese</keyword>
<keyword id="KW-0479">Metal-binding</keyword>
<keyword id="KW-0686">Riboflavin biosynthesis</keyword>
<protein>
    <recommendedName>
        <fullName evidence="1">3,4-dihydroxy-2-butanone 4-phosphate synthase</fullName>
        <shortName evidence="1">DHBP synthase</shortName>
        <ecNumber evidence="1">4.1.99.12</ecNumber>
    </recommendedName>
</protein>
<proteinExistence type="inferred from homology"/>
<accession>A9N5X2</accession>
<gene>
    <name evidence="1" type="primary">ribB</name>
    <name type="ordered locus">SPAB_03988</name>
</gene>
<organism>
    <name type="scientific">Salmonella paratyphi B (strain ATCC BAA-1250 / SPB7)</name>
    <dbReference type="NCBI Taxonomy" id="1016998"/>
    <lineage>
        <taxon>Bacteria</taxon>
        <taxon>Pseudomonadati</taxon>
        <taxon>Pseudomonadota</taxon>
        <taxon>Gammaproteobacteria</taxon>
        <taxon>Enterobacterales</taxon>
        <taxon>Enterobacteriaceae</taxon>
        <taxon>Salmonella</taxon>
    </lineage>
</organism>
<name>RIBB_SALPB</name>
<reference key="1">
    <citation type="submission" date="2007-11" db="EMBL/GenBank/DDBJ databases">
        <authorList>
            <consortium name="The Salmonella enterica serovar Paratyphi B Genome Sequencing Project"/>
            <person name="McClelland M."/>
            <person name="Sanderson E.K."/>
            <person name="Porwollik S."/>
            <person name="Spieth J."/>
            <person name="Clifton W.S."/>
            <person name="Fulton R."/>
            <person name="Cordes M."/>
            <person name="Wollam A."/>
            <person name="Shah N."/>
            <person name="Pepin K."/>
            <person name="Bhonagiri V."/>
            <person name="Nash W."/>
            <person name="Johnson M."/>
            <person name="Thiruvilangam P."/>
            <person name="Wilson R."/>
        </authorList>
    </citation>
    <scope>NUCLEOTIDE SEQUENCE [LARGE SCALE GENOMIC DNA]</scope>
    <source>
        <strain>ATCC BAA-1250 / SPB7</strain>
    </source>
</reference>
<sequence>MNQTLLSSFGTPFERVELALDALREGRGVMVLDDEDRENEGDMIFPAETMTVEQMALTIRHGSGIVCLCITEDRRKQLDLPMMVENNTSAYGTGFTVTIEAAEGVTTGVSAADRVTTVRAAIKDGAKPSDLNRPGHVFPLRAQAGGVLTRGGHTEATIDLMTLAGFKPAGVLCELTNDDGTMARAPECIAFAGQHNMAVVTIEDLVAYRQAHERKAS</sequence>